<evidence type="ECO:0000256" key="1">
    <source>
        <dbReference type="SAM" id="MobiDB-lite"/>
    </source>
</evidence>
<evidence type="ECO:0000269" key="2">
    <source>
    </source>
</evidence>
<evidence type="ECO:0000303" key="3">
    <source>
    </source>
</evidence>
<evidence type="ECO:0000305" key="4"/>
<reference evidence="4" key="1">
    <citation type="journal article" date="1981" name="Nature">
        <title>Sequence and organization of the human mitochondrial genome.</title>
        <authorList>
            <person name="Anderson S."/>
            <person name="Bankier A.T."/>
            <person name="Barrell B.G."/>
            <person name="de Bruijn M.H.L."/>
            <person name="Coulson A.R."/>
            <person name="Drouin J."/>
            <person name="Eperon I.C."/>
            <person name="Nierlich D.P."/>
            <person name="Roe B.A."/>
            <person name="Sanger F."/>
            <person name="Schreier P.H."/>
            <person name="Smith A.J.H."/>
            <person name="Staden R."/>
            <person name="Young I.G."/>
        </authorList>
    </citation>
    <scope>NUCLEOTIDE SEQUENCE [LARGE SCALE GENOMIC DNA]</scope>
</reference>
<reference evidence="4" key="2">
    <citation type="journal article" date="2023" name="Mol. Psychiatry">
        <title>Mitochondrial DNA variation in Alzheimer's disease reveals a unique microprotein called SHMOOSE.</title>
        <authorList>
            <consortium name="Alzheimer's Disease Neuroimaging Initiative"/>
            <person name="Miller B."/>
            <person name="Kim S.J."/>
            <person name="Mehta H.H."/>
            <person name="Cao K."/>
            <person name="Kumagai H."/>
            <person name="Thumaty N."/>
            <person name="Leelaprachakul N."/>
            <person name="Braniff R.G."/>
            <person name="Jiao H."/>
            <person name="Vaughan J."/>
            <person name="Diedrich J."/>
            <person name="Saghatelian A."/>
            <person name="Arpawong T.E."/>
            <person name="Crimmins E.M."/>
            <person name="Ertekin-Taner N."/>
            <person name="Tubi M.A."/>
            <person name="Hare E.T."/>
            <person name="Braskie M.N."/>
            <person name="Decarie-Spain L."/>
            <person name="Kanoski S.E."/>
            <person name="Grodstein F."/>
            <person name="Bennett D.A."/>
            <person name="Zhao L."/>
            <person name="Toga A.W."/>
            <person name="Wan J."/>
            <person name="Yen K."/>
            <person name="Cohen P."/>
        </authorList>
    </citation>
    <scope>PROTEIN SEQUENCE OF 15-25 AND 42-58</scope>
    <scope>FUNCTION</scope>
    <scope>INTERACTION WITH IMMT</scope>
    <scope>SUBCELLULAR LOCATION</scope>
    <scope>TISSUE SPECIFICITY</scope>
    <scope>VARIANT ASN-47</scope>
    <scope>IDENTIFICATION BY MASS SPECTROMETRY</scope>
</reference>
<reference evidence="4" key="3">
    <citation type="journal article" date="2023" name="Mol. Psychiatry">
        <authorList>
            <consortium name="Alzheimer's Disease Neuroimaging Initiative"/>
            <person name="Miller B."/>
            <person name="Kim S.J."/>
            <person name="Mehta H.H."/>
            <person name="Cao K."/>
            <person name="Kumagai H."/>
            <person name="Thumaty N."/>
            <person name="Leelaprachakul N."/>
            <person name="Braniff R.G."/>
            <person name="Jiao H."/>
            <person name="Vaughan J."/>
            <person name="Diedrich J."/>
            <person name="Saghatelian A."/>
            <person name="Arpawong T.E."/>
            <person name="Crimmins E.M."/>
            <person name="Ertekin-Taner N."/>
            <person name="Tubi M.A."/>
            <person name="Hare E.T."/>
            <person name="Braskie M.N."/>
            <person name="Decarie-Spain L."/>
            <person name="Kanoski S.E."/>
            <person name="Grodstein F."/>
            <person name="Bennett D.A."/>
            <person name="Zhao L."/>
            <person name="Toga A.W."/>
            <person name="Wan J."/>
            <person name="Yen K."/>
            <person name="Cohen P."/>
        </authorList>
    </citation>
    <scope>ERRATUM OF PUBMED:36127429</scope>
</reference>
<keyword id="KW-0903">Direct protein sequencing</keyword>
<keyword id="KW-0496">Mitochondrion</keyword>
<keyword id="KW-0539">Nucleus</keyword>
<keyword id="KW-1185">Reference proteome</keyword>
<dbReference type="EMBL" id="J01415">
    <property type="status" value="NOT_ANNOTATED_CDS"/>
    <property type="molecule type" value="Genomic_DNA"/>
</dbReference>
<dbReference type="IntAct" id="C0HM83">
    <property type="interactions" value="1"/>
</dbReference>
<dbReference type="Proteomes" id="UP000005640">
    <property type="component" value="Mitochondrion MT"/>
</dbReference>
<dbReference type="GO" id="GO:0005739">
    <property type="term" value="C:mitochondrion"/>
    <property type="evidence" value="ECO:0000314"/>
    <property type="project" value="UniProtKB"/>
</dbReference>
<dbReference type="GO" id="GO:0005634">
    <property type="term" value="C:nucleus"/>
    <property type="evidence" value="ECO:0000314"/>
    <property type="project" value="UniProtKB"/>
</dbReference>
<dbReference type="Pfam" id="PF23661">
    <property type="entry name" value="SHMOOSE"/>
    <property type="match status" value="1"/>
</dbReference>
<feature type="chain" id="PRO_0000458864" description="Protein SHMOOSE">
    <location>
        <begin position="1"/>
        <end position="58"/>
    </location>
</feature>
<feature type="region of interest" description="Disordered" evidence="1">
    <location>
        <begin position="27"/>
        <end position="58"/>
    </location>
</feature>
<feature type="compositionally biased region" description="Low complexity" evidence="1">
    <location>
        <begin position="35"/>
        <end position="45"/>
    </location>
</feature>
<feature type="compositionally biased region" description="Pro residues" evidence="1">
    <location>
        <begin position="46"/>
        <end position="58"/>
    </location>
</feature>
<feature type="sequence variant" id="VAR_088368" description="Risk factor for Alzheimer disease; protein does not protect against cell death in vitro in neuronal cells stressed with oligomerized amyloid-beta protein 42; dbSNP:rs2853499." evidence="2">
    <original>D</original>
    <variation>N</variation>
    <location>
        <position position="47"/>
    </location>
</feature>
<sequence length="58" mass="6637">MPPCLTTWLSQLLKDNSYPLVLGPKNFGATPNKSNNHAHYYNHPNPDFPNSPHPYHPR</sequence>
<protein>
    <recommendedName>
        <fullName evidence="3">Protein SHMOOSE</fullName>
    </recommendedName>
    <alternativeName>
        <fullName evidence="3">Small human mitochondrial ORF over serine tRNA</fullName>
    </alternativeName>
</protein>
<proteinExistence type="evidence at protein level"/>
<accession>C0HM83</accession>
<organism>
    <name type="scientific">Homo sapiens</name>
    <name type="common">Human</name>
    <dbReference type="NCBI Taxonomy" id="9606"/>
    <lineage>
        <taxon>Eukaryota</taxon>
        <taxon>Metazoa</taxon>
        <taxon>Chordata</taxon>
        <taxon>Craniata</taxon>
        <taxon>Vertebrata</taxon>
        <taxon>Euteleostomi</taxon>
        <taxon>Mammalia</taxon>
        <taxon>Eutheria</taxon>
        <taxon>Euarchontoglires</taxon>
        <taxon>Primates</taxon>
        <taxon>Haplorrhini</taxon>
        <taxon>Catarrhini</taxon>
        <taxon>Hominidae</taxon>
        <taxon>Homo</taxon>
    </lineage>
</organism>
<geneLocation type="mitochondrion"/>
<name>SHMOS_HUMAN</name>
<comment type="function">
    <text evidence="2">Increases neural cell metabolic activity and mitochondrial oxygen consumption rate.</text>
</comment>
<comment type="subunit">
    <text evidence="2">Interacts with IMMT/mitofilin.</text>
</comment>
<comment type="interaction">
    <interactant intactId="EBI-46442350">
        <id>C0HM83</id>
    </interactant>
    <interactant intactId="EBI-473801">
        <id>Q16891</id>
        <label>IMMT</label>
    </interactant>
    <organismsDiffer>false</organismsDiffer>
    <experiments>5</experiments>
</comment>
<comment type="subcellular location">
    <subcellularLocation>
        <location evidence="2">Mitochondrion</location>
    </subcellularLocation>
    <subcellularLocation>
        <location evidence="2">Nucleus</location>
    </subcellularLocation>
    <text evidence="2">Detected in neuronal mitochondria and nuclei.</text>
</comment>
<comment type="tissue specificity">
    <text evidence="2">Detected in cerebrospinal fluid (at protein level).</text>
</comment>
<comment type="miscellaneous">
    <text evidence="2">Shows elevated expression in Alzheimer disease patient brains and protects against cell death in vitro in neuronal cells stressed with oligomerized amyloid-beta protein 42.</text>
</comment>
<comment type="miscellaneous">
    <text evidence="2">Intracerebroventricular administration to the rat brain for 24 hours results in significant alterations to the hypothalamus transcriptome and, to a lesser extent, the hippocampus transcriptome.</text>
</comment>